<organism>
    <name type="scientific">Saccharomyces cerevisiae (strain Lalvin EC1118 / Prise de mousse)</name>
    <name type="common">Baker's yeast</name>
    <dbReference type="NCBI Taxonomy" id="643680"/>
    <lineage>
        <taxon>Eukaryota</taxon>
        <taxon>Fungi</taxon>
        <taxon>Dikarya</taxon>
        <taxon>Ascomycota</taxon>
        <taxon>Saccharomycotina</taxon>
        <taxon>Saccharomycetes</taxon>
        <taxon>Saccharomycetales</taxon>
        <taxon>Saccharomycetaceae</taxon>
        <taxon>Saccharomyces</taxon>
    </lineage>
</organism>
<comment type="function">
    <text evidence="2">Component of the cytosolic iron-sulfur (Fe-S) protein assembly (CIA) machinery required for the maturation of extramitochondrial Fe-S proteins. Part of an electron transfer chain functioning in an early step of cytosolic Fe-S biogenesis, facilitating the de novo assembly of a [4Fe-4S] cluster on the scaffold complex CFD1-NBP35. Electrons are transferred to DRE2 from NADPH via the FAD- and FMN-containing protein TAH18. TAH18-DRE2 are also required for the assembly of the diferric tyrosyl radical cofactor of ribonucleotide reductase (RNR), probably by providing electrons for reduction during radical cofactor maturation in the catalytic small subunit RNR2.</text>
</comment>
<comment type="cofactor">
    <cofactor evidence="2">
        <name>[2Fe-2S] cluster</name>
        <dbReference type="ChEBI" id="CHEBI:190135"/>
    </cofactor>
</comment>
<comment type="cofactor">
    <cofactor evidence="2">
        <name>[4Fe-4S] cluster</name>
        <dbReference type="ChEBI" id="CHEBI:49883"/>
    </cofactor>
</comment>
<comment type="subunit">
    <text evidence="2">Monomer. Interacts with TAH18. Interacts with MIA40.</text>
</comment>
<comment type="subcellular location">
    <subcellularLocation>
        <location evidence="2">Cytoplasm</location>
    </subcellularLocation>
    <subcellularLocation>
        <location evidence="2">Mitochondrion intermembrane space</location>
    </subcellularLocation>
</comment>
<comment type="domain">
    <text evidence="2">The C-terminal domain binds 2 Fe-S clusters but is otherwise mostly in an intrinsically disordered conformation.</text>
</comment>
<comment type="domain">
    <text evidence="2">The N-terminal domain has structural similarity with S-adenosyl-L-methionine-dependent methyltransferases, but does not bind S-adenosyl-L-methionine. It is required for correct assembly of the 2 Fe-S clusters.</text>
</comment>
<comment type="domain">
    <text evidence="2">The twin Cx2C motifs are involved in the recognition by the mitochondrial MIA40-ERV1 disulfide relay system. The formation of 2 disulfide bonds in the Cx2C motifs through dithiol/disulfide exchange reactions effectively traps the protein in the mitochondrial intermembrane space.</text>
</comment>
<comment type="similarity">
    <text evidence="2">Belongs to the anamorsin family.</text>
</comment>
<name>DRE2_YEAS8</name>
<gene>
    <name evidence="2" type="primary">DRE2</name>
    <name type="ORF">EC1118_1K5_3356g</name>
</gene>
<accession>C8ZCN3</accession>
<keyword id="KW-0001">2Fe-2S</keyword>
<keyword id="KW-0004">4Fe-4S</keyword>
<keyword id="KW-0963">Cytoplasm</keyword>
<keyword id="KW-0408">Iron</keyword>
<keyword id="KW-0411">Iron-sulfur</keyword>
<keyword id="KW-0479">Metal-binding</keyword>
<keyword id="KW-0496">Mitochondrion</keyword>
<keyword id="KW-0597">Phosphoprotein</keyword>
<sequence>MSQYKTGLLLIHPAVTTTPELVENTKAQAASKKVKFVDQFLINKLNDGSITLENAKYETVHYLTPEAQTDIKFPKKLISVLADSLKPNGSLIGLSDIYKVDALINGFEIINEPDYCWIKMDSSKLNQTVSIPLKKKKTNNTKLQSGSKLPTFKKASSSTSNLPSFKKADHSRQPIVKETDSFKPPSFKMATEPKVYRVVDDLIEDSDDDDFSSDSSKAQYFDQVDTSDDSIEEEELIDEDGSGKSMITMITCGKSKTKKKKACKDCTCGMKEQEGKEINDIRSQQDKVVKFTEDELTEIDFTIDGKKVGGCGSCSLGDAFRCSGCPYLGLPAFKPGQPINLDSISDDL</sequence>
<feature type="chain" id="PRO_0000392405" description="Fe-S cluster assembly protein DRE2">
    <location>
        <begin position="1"/>
        <end position="348"/>
    </location>
</feature>
<feature type="region of interest" description="N-terminal SAM-like domain" evidence="2">
    <location>
        <begin position="1"/>
        <end position="162"/>
    </location>
</feature>
<feature type="region of interest" description="Disordered" evidence="3">
    <location>
        <begin position="137"/>
        <end position="170"/>
    </location>
</feature>
<feature type="region of interest" description="Linker" evidence="2">
    <location>
        <begin position="163"/>
        <end position="242"/>
    </location>
</feature>
<feature type="region of interest" description="Fe-S binding site A" evidence="2">
    <location>
        <begin position="252"/>
        <end position="268"/>
    </location>
</feature>
<feature type="region of interest" description="Fe-S binding site B" evidence="2">
    <location>
        <begin position="311"/>
        <end position="325"/>
    </location>
</feature>
<feature type="short sequence motif" description="Cx2C motif 1" evidence="2">
    <location>
        <begin position="311"/>
        <end position="314"/>
    </location>
</feature>
<feature type="short sequence motif" description="Cx2C motif 2" evidence="2">
    <location>
        <begin position="322"/>
        <end position="325"/>
    </location>
</feature>
<feature type="compositionally biased region" description="Polar residues" evidence="3">
    <location>
        <begin position="144"/>
        <end position="163"/>
    </location>
</feature>
<feature type="binding site" evidence="2">
    <location>
        <position position="252"/>
    </location>
    <ligand>
        <name>[2Fe-2S] cluster</name>
        <dbReference type="ChEBI" id="CHEBI:190135"/>
    </ligand>
</feature>
<feature type="binding site" evidence="2">
    <location>
        <position position="263"/>
    </location>
    <ligand>
        <name>[2Fe-2S] cluster</name>
        <dbReference type="ChEBI" id="CHEBI:190135"/>
    </ligand>
</feature>
<feature type="binding site" evidence="2">
    <location>
        <position position="266"/>
    </location>
    <ligand>
        <name>[2Fe-2S] cluster</name>
        <dbReference type="ChEBI" id="CHEBI:190135"/>
    </ligand>
</feature>
<feature type="binding site" evidence="2">
    <location>
        <position position="268"/>
    </location>
    <ligand>
        <name>[2Fe-2S] cluster</name>
        <dbReference type="ChEBI" id="CHEBI:190135"/>
    </ligand>
</feature>
<feature type="binding site" evidence="2">
    <location>
        <position position="311"/>
    </location>
    <ligand>
        <name>[4Fe-4S] cluster</name>
        <dbReference type="ChEBI" id="CHEBI:49883"/>
    </ligand>
</feature>
<feature type="binding site" evidence="2">
    <location>
        <position position="314"/>
    </location>
    <ligand>
        <name>[4Fe-4S] cluster</name>
        <dbReference type="ChEBI" id="CHEBI:49883"/>
    </ligand>
</feature>
<feature type="binding site" evidence="2">
    <location>
        <position position="322"/>
    </location>
    <ligand>
        <name>[4Fe-4S] cluster</name>
        <dbReference type="ChEBI" id="CHEBI:49883"/>
    </ligand>
</feature>
<feature type="binding site" evidence="2">
    <location>
        <position position="325"/>
    </location>
    <ligand>
        <name>[4Fe-4S] cluster</name>
        <dbReference type="ChEBI" id="CHEBI:49883"/>
    </ligand>
</feature>
<feature type="modified residue" description="Phosphoserine" evidence="1">
    <location>
        <position position="206"/>
    </location>
</feature>
<protein>
    <recommendedName>
        <fullName evidence="2">Fe-S cluster assembly protein DRE2</fullName>
    </recommendedName>
    <alternativeName>
        <fullName evidence="2">Anamorsin homolog</fullName>
    </alternativeName>
</protein>
<reference key="1">
    <citation type="journal article" date="2009" name="Proc. Natl. Acad. Sci. U.S.A.">
        <title>Eukaryote-to-eukaryote gene transfer events revealed by the genome sequence of the wine yeast Saccharomyces cerevisiae EC1118.</title>
        <authorList>
            <person name="Novo M."/>
            <person name="Bigey F."/>
            <person name="Beyne E."/>
            <person name="Galeote V."/>
            <person name="Gavory F."/>
            <person name="Mallet S."/>
            <person name="Cambon B."/>
            <person name="Legras J.-L."/>
            <person name="Wincker P."/>
            <person name="Casaregola S."/>
            <person name="Dequin S."/>
        </authorList>
    </citation>
    <scope>NUCLEOTIDE SEQUENCE [LARGE SCALE GENOMIC DNA]</scope>
    <source>
        <strain>Lalvin EC1118 / Prise de mousse</strain>
    </source>
</reference>
<evidence type="ECO:0000250" key="1">
    <source>
        <dbReference type="UniProtKB" id="P36152"/>
    </source>
</evidence>
<evidence type="ECO:0000255" key="2">
    <source>
        <dbReference type="HAMAP-Rule" id="MF_03115"/>
    </source>
</evidence>
<evidence type="ECO:0000256" key="3">
    <source>
        <dbReference type="SAM" id="MobiDB-lite"/>
    </source>
</evidence>
<dbReference type="EMBL" id="FN393077">
    <property type="protein sequence ID" value="CAY81149.1"/>
    <property type="molecule type" value="Genomic_DNA"/>
</dbReference>
<dbReference type="BMRB" id="C8ZCN3"/>
<dbReference type="SMR" id="C8ZCN3"/>
<dbReference type="HOGENOM" id="CLU_067152_0_0_1"/>
<dbReference type="OrthoDB" id="5651at4893"/>
<dbReference type="Proteomes" id="UP000000286">
    <property type="component" value="Chromosome XI, Scaffold EC1118_1K5"/>
</dbReference>
<dbReference type="GO" id="GO:0005758">
    <property type="term" value="C:mitochondrial intermembrane space"/>
    <property type="evidence" value="ECO:0007669"/>
    <property type="project" value="UniProtKB-SubCell"/>
</dbReference>
<dbReference type="GO" id="GO:0051537">
    <property type="term" value="F:2 iron, 2 sulfur cluster binding"/>
    <property type="evidence" value="ECO:0007669"/>
    <property type="project" value="UniProtKB-UniRule"/>
</dbReference>
<dbReference type="GO" id="GO:0051539">
    <property type="term" value="F:4 iron, 4 sulfur cluster binding"/>
    <property type="evidence" value="ECO:0007669"/>
    <property type="project" value="UniProtKB-KW"/>
</dbReference>
<dbReference type="GO" id="GO:0009055">
    <property type="term" value="F:electron transfer activity"/>
    <property type="evidence" value="ECO:0007669"/>
    <property type="project" value="UniProtKB-UniRule"/>
</dbReference>
<dbReference type="GO" id="GO:0046872">
    <property type="term" value="F:metal ion binding"/>
    <property type="evidence" value="ECO:0007669"/>
    <property type="project" value="UniProtKB-KW"/>
</dbReference>
<dbReference type="GO" id="GO:0016226">
    <property type="term" value="P:iron-sulfur cluster assembly"/>
    <property type="evidence" value="ECO:0007669"/>
    <property type="project" value="UniProtKB-UniRule"/>
</dbReference>
<dbReference type="FunFam" id="3.40.50.11000:FF:000001">
    <property type="entry name" value="Fe-S cluster assembly protein DRE2"/>
    <property type="match status" value="1"/>
</dbReference>
<dbReference type="Gene3D" id="3.40.50.11000">
    <property type="entry name" value="Fe-S cluster assembly protein Dre2, N-terminal domain"/>
    <property type="match status" value="1"/>
</dbReference>
<dbReference type="HAMAP" id="MF_03115">
    <property type="entry name" value="Anamorsin"/>
    <property type="match status" value="1"/>
</dbReference>
<dbReference type="InterPro" id="IPR007785">
    <property type="entry name" value="Anamorsin"/>
</dbReference>
<dbReference type="InterPro" id="IPR046408">
    <property type="entry name" value="CIAPIN1"/>
</dbReference>
<dbReference type="InterPro" id="IPR031838">
    <property type="entry name" value="Dre2_N"/>
</dbReference>
<dbReference type="PANTHER" id="PTHR13273">
    <property type="entry name" value="ANAMORSIN"/>
    <property type="match status" value="1"/>
</dbReference>
<dbReference type="PANTHER" id="PTHR13273:SF14">
    <property type="entry name" value="ANAMORSIN"/>
    <property type="match status" value="1"/>
</dbReference>
<dbReference type="Pfam" id="PF05093">
    <property type="entry name" value="CIAPIN1"/>
    <property type="match status" value="1"/>
</dbReference>
<dbReference type="Pfam" id="PF16803">
    <property type="entry name" value="DRE2_N"/>
    <property type="match status" value="1"/>
</dbReference>
<proteinExistence type="inferred from homology"/>